<protein>
    <recommendedName>
        <fullName>Pentatricopeptide repeat-containing protein At2g40240, mitochondrial</fullName>
    </recommendedName>
</protein>
<name>PP196_ARATH</name>
<gene>
    <name type="ordered locus">At2g40240</name>
    <name type="ORF">T3G21</name>
    <name type="ORF">T7M7.22</name>
</gene>
<reference key="1">
    <citation type="journal article" date="1999" name="Genome Res.">
        <title>A cluster of ABA-regulated genes on Arabidopsis thaliana BAC T07M07.</title>
        <authorList>
            <person name="Wang M.L."/>
            <person name="Belmonte S."/>
            <person name="Kim U."/>
            <person name="Dolan M."/>
            <person name="Morris J.W."/>
            <person name="Goodman H.M."/>
        </authorList>
    </citation>
    <scope>NUCLEOTIDE SEQUENCE [LARGE SCALE GENOMIC DNA]</scope>
</reference>
<reference key="2">
    <citation type="journal article" date="1999" name="Nature">
        <title>Sequence and analysis of chromosome 2 of the plant Arabidopsis thaliana.</title>
        <authorList>
            <person name="Lin X."/>
            <person name="Kaul S."/>
            <person name="Rounsley S.D."/>
            <person name="Shea T.P."/>
            <person name="Benito M.-I."/>
            <person name="Town C.D."/>
            <person name="Fujii C.Y."/>
            <person name="Mason T.M."/>
            <person name="Bowman C.L."/>
            <person name="Barnstead M.E."/>
            <person name="Feldblyum T.V."/>
            <person name="Buell C.R."/>
            <person name="Ketchum K.A."/>
            <person name="Lee J.J."/>
            <person name="Ronning C.M."/>
            <person name="Koo H.L."/>
            <person name="Moffat K.S."/>
            <person name="Cronin L.A."/>
            <person name="Shen M."/>
            <person name="Pai G."/>
            <person name="Van Aken S."/>
            <person name="Umayam L."/>
            <person name="Tallon L.J."/>
            <person name="Gill J.E."/>
            <person name="Adams M.D."/>
            <person name="Carrera A.J."/>
            <person name="Creasy T.H."/>
            <person name="Goodman H.M."/>
            <person name="Somerville C.R."/>
            <person name="Copenhaver G.P."/>
            <person name="Preuss D."/>
            <person name="Nierman W.C."/>
            <person name="White O."/>
            <person name="Eisen J.A."/>
            <person name="Salzberg S.L."/>
            <person name="Fraser C.M."/>
            <person name="Venter J.C."/>
        </authorList>
    </citation>
    <scope>NUCLEOTIDE SEQUENCE [LARGE SCALE GENOMIC DNA]</scope>
    <source>
        <strain>cv. Columbia</strain>
    </source>
</reference>
<reference key="3">
    <citation type="journal article" date="2017" name="Plant J.">
        <title>Araport11: a complete reannotation of the Arabidopsis thaliana reference genome.</title>
        <authorList>
            <person name="Cheng C.Y."/>
            <person name="Krishnakumar V."/>
            <person name="Chan A.P."/>
            <person name="Thibaud-Nissen F."/>
            <person name="Schobel S."/>
            <person name="Town C.D."/>
        </authorList>
    </citation>
    <scope>GENOME REANNOTATION</scope>
    <source>
        <strain>cv. Columbia</strain>
    </source>
</reference>
<reference key="4">
    <citation type="journal article" date="2003" name="Science">
        <title>Empirical analysis of transcriptional activity in the Arabidopsis genome.</title>
        <authorList>
            <person name="Yamada K."/>
            <person name="Lim J."/>
            <person name="Dale J.M."/>
            <person name="Chen H."/>
            <person name="Shinn P."/>
            <person name="Palm C.J."/>
            <person name="Southwick A.M."/>
            <person name="Wu H.C."/>
            <person name="Kim C.J."/>
            <person name="Nguyen M."/>
            <person name="Pham P.K."/>
            <person name="Cheuk R.F."/>
            <person name="Karlin-Newmann G."/>
            <person name="Liu S.X."/>
            <person name="Lam B."/>
            <person name="Sakano H."/>
            <person name="Wu T."/>
            <person name="Yu G."/>
            <person name="Miranda M."/>
            <person name="Quach H.L."/>
            <person name="Tripp M."/>
            <person name="Chang C.H."/>
            <person name="Lee J.M."/>
            <person name="Toriumi M.J."/>
            <person name="Chan M.M."/>
            <person name="Tang C.C."/>
            <person name="Onodera C.S."/>
            <person name="Deng J.M."/>
            <person name="Akiyama K."/>
            <person name="Ansari Y."/>
            <person name="Arakawa T."/>
            <person name="Banh J."/>
            <person name="Banno F."/>
            <person name="Bowser L."/>
            <person name="Brooks S.Y."/>
            <person name="Carninci P."/>
            <person name="Chao Q."/>
            <person name="Choy N."/>
            <person name="Enju A."/>
            <person name="Goldsmith A.D."/>
            <person name="Gurjal M."/>
            <person name="Hansen N.F."/>
            <person name="Hayashizaki Y."/>
            <person name="Johnson-Hopson C."/>
            <person name="Hsuan V.W."/>
            <person name="Iida K."/>
            <person name="Karnes M."/>
            <person name="Khan S."/>
            <person name="Koesema E."/>
            <person name="Ishida J."/>
            <person name="Jiang P.X."/>
            <person name="Jones T."/>
            <person name="Kawai J."/>
            <person name="Kamiya A."/>
            <person name="Meyers C."/>
            <person name="Nakajima M."/>
            <person name="Narusaka M."/>
            <person name="Seki M."/>
            <person name="Sakurai T."/>
            <person name="Satou M."/>
            <person name="Tamse R."/>
            <person name="Vaysberg M."/>
            <person name="Wallender E.K."/>
            <person name="Wong C."/>
            <person name="Yamamura Y."/>
            <person name="Yuan S."/>
            <person name="Shinozaki K."/>
            <person name="Davis R.W."/>
            <person name="Theologis A."/>
            <person name="Ecker J.R."/>
        </authorList>
    </citation>
    <scope>NUCLEOTIDE SEQUENCE [LARGE SCALE MRNA]</scope>
    <source>
        <strain>cv. Columbia</strain>
    </source>
</reference>
<reference key="5">
    <citation type="submission" date="2006-07" db="EMBL/GenBank/DDBJ databases">
        <title>Large-scale analysis of RIKEN Arabidopsis full-length (RAFL) cDNAs.</title>
        <authorList>
            <person name="Totoki Y."/>
            <person name="Seki M."/>
            <person name="Ishida J."/>
            <person name="Nakajima M."/>
            <person name="Enju A."/>
            <person name="Kamiya A."/>
            <person name="Narusaka M."/>
            <person name="Shin-i T."/>
            <person name="Nakagawa M."/>
            <person name="Sakamoto N."/>
            <person name="Oishi K."/>
            <person name="Kohara Y."/>
            <person name="Kobayashi M."/>
            <person name="Toyoda A."/>
            <person name="Sakaki Y."/>
            <person name="Sakurai T."/>
            <person name="Iida K."/>
            <person name="Akiyama K."/>
            <person name="Satou M."/>
            <person name="Toyoda T."/>
            <person name="Konagaya A."/>
            <person name="Carninci P."/>
            <person name="Kawai J."/>
            <person name="Hayashizaki Y."/>
            <person name="Shinozaki K."/>
        </authorList>
    </citation>
    <scope>NUCLEOTIDE SEQUENCE [LARGE SCALE MRNA]</scope>
    <source>
        <strain>cv. Columbia</strain>
    </source>
</reference>
<reference key="6">
    <citation type="journal article" date="2004" name="Plant Cell">
        <title>Genome-wide analysis of Arabidopsis pentatricopeptide repeat proteins reveals their essential role in organelle biogenesis.</title>
        <authorList>
            <person name="Lurin C."/>
            <person name="Andres C."/>
            <person name="Aubourg S."/>
            <person name="Bellaoui M."/>
            <person name="Bitton F."/>
            <person name="Bruyere C."/>
            <person name="Caboche M."/>
            <person name="Debast C."/>
            <person name="Gualberto J."/>
            <person name="Hoffmann B."/>
            <person name="Lecharny A."/>
            <person name="Le Ret M."/>
            <person name="Martin-Magniette M.-L."/>
            <person name="Mireau H."/>
            <person name="Peeters N."/>
            <person name="Renou J.-P."/>
            <person name="Szurek B."/>
            <person name="Taconnat L."/>
            <person name="Small I."/>
        </authorList>
    </citation>
    <scope>GENE FAMILY</scope>
</reference>
<accession>Q9S733</accession>
<feature type="transit peptide" description="Mitochondrion" evidence="1">
    <location>
        <begin position="1"/>
        <end position="27"/>
    </location>
</feature>
<feature type="chain" id="PRO_0000356055" description="Pentatricopeptide repeat-containing protein At2g40240, mitochondrial">
    <location>
        <begin position="28"/>
        <end position="351"/>
    </location>
</feature>
<feature type="repeat" description="PPR 1">
    <location>
        <begin position="106"/>
        <end position="140"/>
    </location>
</feature>
<feature type="repeat" description="PPR 2">
    <location>
        <begin position="141"/>
        <end position="175"/>
    </location>
</feature>
<feature type="repeat" description="PPR 3">
    <location>
        <begin position="176"/>
        <end position="210"/>
    </location>
</feature>
<feature type="repeat" description="PPR 4">
    <location>
        <begin position="211"/>
        <end position="245"/>
    </location>
</feature>
<feature type="repeat" description="PPR 5">
    <location>
        <begin position="246"/>
        <end position="280"/>
    </location>
</feature>
<feature type="repeat" description="PPR 6">
    <location>
        <begin position="281"/>
        <end position="315"/>
    </location>
</feature>
<keyword id="KW-0496">Mitochondrion</keyword>
<keyword id="KW-1185">Reference proteome</keyword>
<keyword id="KW-0677">Repeat</keyword>
<keyword id="KW-0809">Transit peptide</keyword>
<comment type="subcellular location">
    <subcellularLocation>
        <location evidence="2">Mitochondrion</location>
    </subcellularLocation>
</comment>
<comment type="similarity">
    <text evidence="2">Belongs to the PPR family. P subfamily.</text>
</comment>
<comment type="online information" name="Pentatricopeptide repeat proteins">
    <link uri="https://ppr.plantenergy.uwa.edu.au"/>
</comment>
<organism>
    <name type="scientific">Arabidopsis thaliana</name>
    <name type="common">Mouse-ear cress</name>
    <dbReference type="NCBI Taxonomy" id="3702"/>
    <lineage>
        <taxon>Eukaryota</taxon>
        <taxon>Viridiplantae</taxon>
        <taxon>Streptophyta</taxon>
        <taxon>Embryophyta</taxon>
        <taxon>Tracheophyta</taxon>
        <taxon>Spermatophyta</taxon>
        <taxon>Magnoliopsida</taxon>
        <taxon>eudicotyledons</taxon>
        <taxon>Gunneridae</taxon>
        <taxon>Pentapetalae</taxon>
        <taxon>rosids</taxon>
        <taxon>malvids</taxon>
        <taxon>Brassicales</taxon>
        <taxon>Brassicaceae</taxon>
        <taxon>Camelineae</taxon>
        <taxon>Arabidopsis</taxon>
    </lineage>
</organism>
<sequence length="351" mass="39881">MSLLRRRFVKQSVNCITFLQILAERSFSTVKIPPGRRKTTEFDKLINEAGSSGDFETVRRLLNNRIVLGSFNTSDTFKFLTNTASYSSYLEDLRRVLPQIDGGFSRKNAYDILISRLCKLGRIDDALIVIGDMSNGRLGLTPSTYHPILCSLTRKYKIEEAWRVVESMRSKSVSMDVTAYNYFLTSHCYDGELESASEVMRKIEEDGNSPDSRSYDALVLGACRAGKVEAAMAILRRMEEDGVTVLYSTHAHVITGLVEGGYYALGLEFVMAYAGKDLRLDSESFGFLAGKLVKRKRYEEAMIVVKEMVMRGLRMGDELRQFYEGNVRYDDDDEDSLVQSERECYIEQKLN</sequence>
<evidence type="ECO:0000255" key="1"/>
<evidence type="ECO:0000305" key="2"/>
<proteinExistence type="evidence at transcript level"/>
<dbReference type="EMBL" id="AF085279">
    <property type="protein sequence ID" value="AAD25939.1"/>
    <property type="molecule type" value="Genomic_DNA"/>
</dbReference>
<dbReference type="EMBL" id="AC007020">
    <property type="protein sequence ID" value="AAD25659.1"/>
    <property type="molecule type" value="Genomic_DNA"/>
</dbReference>
<dbReference type="EMBL" id="CP002685">
    <property type="protein sequence ID" value="AEC09801.1"/>
    <property type="molecule type" value="Genomic_DNA"/>
</dbReference>
<dbReference type="EMBL" id="BT004143">
    <property type="protein sequence ID" value="AAO42164.1"/>
    <property type="molecule type" value="mRNA"/>
</dbReference>
<dbReference type="EMBL" id="BT005688">
    <property type="protein sequence ID" value="AAO64108.1"/>
    <property type="molecule type" value="mRNA"/>
</dbReference>
<dbReference type="EMBL" id="AK228544">
    <property type="protein sequence ID" value="BAF00465.1"/>
    <property type="molecule type" value="mRNA"/>
</dbReference>
<dbReference type="PIR" id="A84827">
    <property type="entry name" value="A84827"/>
</dbReference>
<dbReference type="RefSeq" id="NP_181553.1">
    <property type="nucleotide sequence ID" value="NM_129582.3"/>
</dbReference>
<dbReference type="SMR" id="Q9S733"/>
<dbReference type="FunCoup" id="Q9S733">
    <property type="interactions" value="65"/>
</dbReference>
<dbReference type="STRING" id="3702.Q9S733"/>
<dbReference type="PaxDb" id="3702-AT2G40240.1"/>
<dbReference type="ProteomicsDB" id="249157"/>
<dbReference type="EnsemblPlants" id="AT2G40240.1">
    <property type="protein sequence ID" value="AT2G40240.1"/>
    <property type="gene ID" value="AT2G40240"/>
</dbReference>
<dbReference type="GeneID" id="818616"/>
<dbReference type="Gramene" id="AT2G40240.1">
    <property type="protein sequence ID" value="AT2G40240.1"/>
    <property type="gene ID" value="AT2G40240"/>
</dbReference>
<dbReference type="KEGG" id="ath:AT2G40240"/>
<dbReference type="Araport" id="AT2G40240"/>
<dbReference type="TAIR" id="AT2G40240"/>
<dbReference type="eggNOG" id="KOG4197">
    <property type="taxonomic scope" value="Eukaryota"/>
</dbReference>
<dbReference type="HOGENOM" id="CLU_832474_0_0_1"/>
<dbReference type="InParanoid" id="Q9S733"/>
<dbReference type="OMA" id="VVKEMVM"/>
<dbReference type="OrthoDB" id="185373at2759"/>
<dbReference type="PhylomeDB" id="Q9S733"/>
<dbReference type="PRO" id="PR:Q9S733"/>
<dbReference type="Proteomes" id="UP000006548">
    <property type="component" value="Chromosome 2"/>
</dbReference>
<dbReference type="ExpressionAtlas" id="Q9S733">
    <property type="expression patterns" value="baseline and differential"/>
</dbReference>
<dbReference type="GO" id="GO:0005739">
    <property type="term" value="C:mitochondrion"/>
    <property type="evidence" value="ECO:0007005"/>
    <property type="project" value="TAIR"/>
</dbReference>
<dbReference type="FunFam" id="1.25.40.10:FF:002278">
    <property type="entry name" value="Pentatricopeptide repeat-containing protein At2g40240, mitochondrial"/>
    <property type="match status" value="1"/>
</dbReference>
<dbReference type="Gene3D" id="1.25.40.10">
    <property type="entry name" value="Tetratricopeptide repeat domain"/>
    <property type="match status" value="2"/>
</dbReference>
<dbReference type="InterPro" id="IPR002885">
    <property type="entry name" value="Pentatricopeptide_rpt"/>
</dbReference>
<dbReference type="InterPro" id="IPR011990">
    <property type="entry name" value="TPR-like_helical_dom_sf"/>
</dbReference>
<dbReference type="NCBIfam" id="TIGR00756">
    <property type="entry name" value="PPR"/>
    <property type="match status" value="2"/>
</dbReference>
<dbReference type="PANTHER" id="PTHR47941">
    <property type="entry name" value="PENTATRICOPEPTIDE REPEAT-CONTAINING PROTEIN 3, MITOCHONDRIAL"/>
    <property type="match status" value="1"/>
</dbReference>
<dbReference type="Pfam" id="PF01535">
    <property type="entry name" value="PPR"/>
    <property type="match status" value="3"/>
</dbReference>
<dbReference type="Pfam" id="PF12854">
    <property type="entry name" value="PPR_1"/>
    <property type="match status" value="1"/>
</dbReference>
<dbReference type="PROSITE" id="PS51375">
    <property type="entry name" value="PPR"/>
    <property type="match status" value="5"/>
</dbReference>